<dbReference type="EMBL" id="FJ534553">
    <property type="protein sequence ID" value="ACL36923.1"/>
    <property type="molecule type" value="mRNA"/>
</dbReference>
<dbReference type="SMR" id="D2DGW3"/>
<dbReference type="Allergome" id="6136">
    <property type="allergen name" value="Tyr p 24"/>
</dbReference>
<dbReference type="Allergome" id="6137">
    <property type="allergen name" value="Tyr p 24.0101"/>
</dbReference>
<dbReference type="GO" id="GO:0016460">
    <property type="term" value="C:myosin II complex"/>
    <property type="evidence" value="ECO:0007669"/>
    <property type="project" value="TreeGrafter"/>
</dbReference>
<dbReference type="GO" id="GO:0005509">
    <property type="term" value="F:calcium ion binding"/>
    <property type="evidence" value="ECO:0007669"/>
    <property type="project" value="InterPro"/>
</dbReference>
<dbReference type="CDD" id="cd00051">
    <property type="entry name" value="EFh"/>
    <property type="match status" value="1"/>
</dbReference>
<dbReference type="FunFam" id="1.10.238.10:FF:000003">
    <property type="entry name" value="Calmodulin A"/>
    <property type="match status" value="1"/>
</dbReference>
<dbReference type="Gene3D" id="1.10.238.10">
    <property type="entry name" value="EF-hand"/>
    <property type="match status" value="2"/>
</dbReference>
<dbReference type="InterPro" id="IPR050230">
    <property type="entry name" value="CALM/Myosin/TropC-like"/>
</dbReference>
<dbReference type="InterPro" id="IPR011992">
    <property type="entry name" value="EF-hand-dom_pair"/>
</dbReference>
<dbReference type="InterPro" id="IPR018247">
    <property type="entry name" value="EF_Hand_1_Ca_BS"/>
</dbReference>
<dbReference type="InterPro" id="IPR002048">
    <property type="entry name" value="EF_hand_dom"/>
</dbReference>
<dbReference type="PANTHER" id="PTHR23048:SF0">
    <property type="entry name" value="CALMODULIN LIKE 3"/>
    <property type="match status" value="1"/>
</dbReference>
<dbReference type="PANTHER" id="PTHR23048">
    <property type="entry name" value="MYOSIN LIGHT CHAIN 1, 3"/>
    <property type="match status" value="1"/>
</dbReference>
<dbReference type="Pfam" id="PF13499">
    <property type="entry name" value="EF-hand_7"/>
    <property type="match status" value="2"/>
</dbReference>
<dbReference type="SMART" id="SM00054">
    <property type="entry name" value="EFh"/>
    <property type="match status" value="4"/>
</dbReference>
<dbReference type="SUPFAM" id="SSF47473">
    <property type="entry name" value="EF-hand"/>
    <property type="match status" value="1"/>
</dbReference>
<dbReference type="PROSITE" id="PS00018">
    <property type="entry name" value="EF_HAND_1"/>
    <property type="match status" value="2"/>
</dbReference>
<dbReference type="PROSITE" id="PS50222">
    <property type="entry name" value="EF_HAND_2"/>
    <property type="match status" value="4"/>
</dbReference>
<protein>
    <recommendedName>
        <fullName evidence="3 5">Troponin C</fullName>
    </recommendedName>
    <alternativeName>
        <fullName evidence="3">Allergen Tyr p 24</fullName>
    </alternativeName>
    <allergenName evidence="4">Tyr p 24.0101</allergenName>
</protein>
<name>TNNC_TYRPU</name>
<comment type="function">
    <text evidence="4">Troponin is the central regulatory protein of striated muscle contraction. Tn consists of three components: Tn-I which is the inhibitor of actomyosin ATPase, Tn-T which contains the binding site for tropomyosin and Tn-C. The binding of calcium to Tn-C abolishes the inhibitory action of Tn on actin filaments.</text>
</comment>
<comment type="allergen">
    <text evidence="2">Causes an allergic reaction in human. Binds to IgE in 11% of the 46 patients tested allergic to storage mite T.putrescentiae. IgE reactivity is calcium-dependent. Addition of 10 mM CaCl(2) increases the intensity of IgE-binding approximately 2-fold in 4 sera out of 5 tested.</text>
</comment>
<comment type="similarity">
    <text evidence="4">Belongs to the troponin C family.</text>
</comment>
<sequence>MSVEELSKEQVQMLRKAFDMFDRDKKGYIHTNMVSTILRTLGQTFEENDLQQLIIEIDADGSGELEFDEFLTLTARFLVEEDTEAMQEELREAFRMYDKEGNGYIPTSALREILRALDDKLTEDELDEMIAEIDTDGSGTVDFDEFMEMMTGD</sequence>
<proteinExistence type="evidence at protein level"/>
<accession>D2DGW3</accession>
<reference evidence="5" key="1">
    <citation type="journal article" date="2010" name="Int. Arch. Allergy Immunol.">
        <title>Allergenicity of recombinant troponin C from Tyrophagus putrescentiae.</title>
        <authorList>
            <person name="Jeong K.Y."/>
            <person name="Kim C.R."/>
            <person name="Un S."/>
            <person name="Yi M.H."/>
            <person name="Lee I.Y."/>
            <person name="Park J.W."/>
            <person name="Hong C.S."/>
            <person name="Yong T.S."/>
        </authorList>
    </citation>
    <scope>NUCLEOTIDE SEQUENCE [MRNA]</scope>
    <scope>ALLERGEN</scope>
</reference>
<evidence type="ECO:0000255" key="1">
    <source>
        <dbReference type="PROSITE-ProRule" id="PRU00448"/>
    </source>
</evidence>
<evidence type="ECO:0000269" key="2">
    <source>
    </source>
</evidence>
<evidence type="ECO:0000303" key="3">
    <source>
    </source>
</evidence>
<evidence type="ECO:0000305" key="4"/>
<evidence type="ECO:0000312" key="5">
    <source>
        <dbReference type="EMBL" id="ACL36923.1"/>
    </source>
</evidence>
<organism evidence="5">
    <name type="scientific">Tyrophagus putrescentiae</name>
    <name type="common">Mold mite</name>
    <name type="synonym">Acarus putrescentiae</name>
    <dbReference type="NCBI Taxonomy" id="59818"/>
    <lineage>
        <taxon>Eukaryota</taxon>
        <taxon>Metazoa</taxon>
        <taxon>Ecdysozoa</taxon>
        <taxon>Arthropoda</taxon>
        <taxon>Chelicerata</taxon>
        <taxon>Arachnida</taxon>
        <taxon>Acari</taxon>
        <taxon>Acariformes</taxon>
        <taxon>Sarcoptiformes</taxon>
        <taxon>Astigmata</taxon>
        <taxon>Acaroidea</taxon>
        <taxon>Acaridae</taxon>
        <taxon>Tyrophaginae</taxon>
        <taxon>Tyrophagus</taxon>
    </lineage>
</organism>
<keyword id="KW-0020">Allergen</keyword>
<keyword id="KW-0106">Calcium</keyword>
<keyword id="KW-0479">Metal-binding</keyword>
<keyword id="KW-0514">Muscle protein</keyword>
<keyword id="KW-0677">Repeat</keyword>
<feature type="chain" id="PRO_0000447338" description="Troponin C">
    <location>
        <begin position="1"/>
        <end position="153"/>
    </location>
</feature>
<feature type="domain" description="EF-hand 1" evidence="1">
    <location>
        <begin position="9"/>
        <end position="44"/>
    </location>
</feature>
<feature type="domain" description="EF-hand 2" evidence="1">
    <location>
        <begin position="45"/>
        <end position="80"/>
    </location>
</feature>
<feature type="domain" description="EF-hand 3" evidence="1">
    <location>
        <begin position="85"/>
        <end position="120"/>
    </location>
</feature>
<feature type="domain" description="EF-hand 4" evidence="1">
    <location>
        <begin position="121"/>
        <end position="153"/>
    </location>
</feature>
<feature type="binding site" evidence="1">
    <location>
        <position position="58"/>
    </location>
    <ligand>
        <name>Ca(2+)</name>
        <dbReference type="ChEBI" id="CHEBI:29108"/>
        <label>1</label>
    </ligand>
</feature>
<feature type="binding site" evidence="1">
    <location>
        <position position="60"/>
    </location>
    <ligand>
        <name>Ca(2+)</name>
        <dbReference type="ChEBI" id="CHEBI:29108"/>
        <label>1</label>
    </ligand>
</feature>
<feature type="binding site" evidence="1">
    <location>
        <position position="62"/>
    </location>
    <ligand>
        <name>Ca(2+)</name>
        <dbReference type="ChEBI" id="CHEBI:29108"/>
        <label>1</label>
    </ligand>
</feature>
<feature type="binding site" evidence="1">
    <location>
        <position position="64"/>
    </location>
    <ligand>
        <name>Ca(2+)</name>
        <dbReference type="ChEBI" id="CHEBI:29108"/>
        <label>1</label>
    </ligand>
</feature>
<feature type="binding site" evidence="1">
    <location>
        <position position="69"/>
    </location>
    <ligand>
        <name>Ca(2+)</name>
        <dbReference type="ChEBI" id="CHEBI:29108"/>
        <label>1</label>
    </ligand>
</feature>
<feature type="binding site" evidence="1">
    <location>
        <position position="134"/>
    </location>
    <ligand>
        <name>Ca(2+)</name>
        <dbReference type="ChEBI" id="CHEBI:29108"/>
        <label>2</label>
    </ligand>
</feature>
<feature type="binding site" evidence="1">
    <location>
        <position position="136"/>
    </location>
    <ligand>
        <name>Ca(2+)</name>
        <dbReference type="ChEBI" id="CHEBI:29108"/>
        <label>2</label>
    </ligand>
</feature>
<feature type="binding site" evidence="1">
    <location>
        <position position="138"/>
    </location>
    <ligand>
        <name>Ca(2+)</name>
        <dbReference type="ChEBI" id="CHEBI:29108"/>
        <label>2</label>
    </ligand>
</feature>
<feature type="binding site" evidence="1">
    <location>
        <position position="140"/>
    </location>
    <ligand>
        <name>Ca(2+)</name>
        <dbReference type="ChEBI" id="CHEBI:29108"/>
        <label>2</label>
    </ligand>
</feature>
<feature type="binding site" evidence="1">
    <location>
        <position position="145"/>
    </location>
    <ligand>
        <name>Ca(2+)</name>
        <dbReference type="ChEBI" id="CHEBI:29108"/>
        <label>2</label>
    </ligand>
</feature>